<protein>
    <recommendedName>
        <fullName evidence="1">2-oxoglutarate dehydrogenase E1 component</fullName>
        <ecNumber evidence="1">1.2.4.2</ecNumber>
    </recommendedName>
    <alternativeName>
        <fullName evidence="1">Alpha-ketoglutarate dehydrogenase</fullName>
    </alternativeName>
</protein>
<reference key="1">
    <citation type="journal article" date="2008" name="PLoS ONE">
        <title>Genome sequence of Brucella abortus vaccine strain S19 compared to virulent strains yields candidate virulence genes.</title>
        <authorList>
            <person name="Crasta O.R."/>
            <person name="Folkerts O."/>
            <person name="Fei Z."/>
            <person name="Mane S.P."/>
            <person name="Evans C."/>
            <person name="Martino-Catt S."/>
            <person name="Bricker B."/>
            <person name="Yu G."/>
            <person name="Du L."/>
            <person name="Sobral B.W."/>
        </authorList>
    </citation>
    <scope>NUCLEOTIDE SEQUENCE [LARGE SCALE GENOMIC DNA]</scope>
    <source>
        <strain>S19</strain>
    </source>
</reference>
<sequence>MAKQEQAPDRANDVFALTSFLYGGNADYIEELYAKYEDDPNSVDPQWRDFFAKLGDNADDVKKNAEGPSWTRKNWPIAANGELVSALDGNWAEVEKHVTDKLKGKAAKGEAKGAAGTPLTAEEITQAARDSVRAIMMIRAYRMRGHLHANLDPLGLAEKPNDYNELEPENYGFTPADYNRKIFIDNVLGLEYATVPEMLDILKRTYCGAIGVEFMHISDPAEKAWIQERIEGPDKKVAFTPEGKKAILSKLIEAEGFEQFIDVKYKGTKRFGLDGGESLIPALEQIVKRGGQMGLKEVVLGMAHRGRLNVLSQVMGKPHRAIFHEFKGGSYTPDDVEGSGDVKYHLGASSDREFDGNKVHLSLTANPSHLEIVNPVVMGKARAKQDLLVGRTRDDMVPLSERAKVLPLLLHGDAAFAGQGVVAECLGLSGLKGHRVAGTLHFIINNQIGFTTNPAFSRSSPYPSDVAKMIEAPIFHVNGDDPEAVVFAAKVATEFRMTFHKPVVIDMFCYRRFGHNEGDEPSFTQPLMYKAIRAHKTTVQLYGEKLIAEGLVTQDDIDRMKADWRQKLEGEFEAGQSYKPNKADWLDGAWAGLRTADNADEQRRGKTAVPVKTLKEIGKKLVEVPKDFHVHRTIQRFLDNRAKMMETGEGIDWATAESLAFGSLAVEGHPIRLSGQDVERGTFSQRHTVLYDQENQNRYIPLNNLQKGQAIYEAINSMLSEEAVLGYEYGYSLSDPRALVLWEAQFGDFANGAQVVFDQFISSGERKWLRMSGLVCLLPHGFEGQGPEHSSARLERYLQLCAEDNMQVANVTTPANYFHILRRQMKRDFRKPLIMMTPKSLLRHKRAISTLAELSGESSFHRLLWDDARYNKDKGIKLQKDAKIRRVVLCSGKVYYDLYEEREKRGIDDVYLLRVEQLYPFPAKALINELSRFRHAEMVWCQEEPKNMGAWSFIDPYLEWVLAHIDAKHQRVRYAGRPAAASPATGLMSKHLAQLAAFLEDALG</sequence>
<comment type="function">
    <text evidence="1">E1 component of the 2-oxoglutarate dehydrogenase (OGDH) complex which catalyzes the decarboxylation of 2-oxoglutarate, the first step in the conversion of 2-oxoglutarate to succinyl-CoA and CO(2).</text>
</comment>
<comment type="catalytic activity">
    <reaction evidence="1">
        <text>N(6)-[(R)-lipoyl]-L-lysyl-[protein] + 2-oxoglutarate + H(+) = N(6)-[(R)-S(8)-succinyldihydrolipoyl]-L-lysyl-[protein] + CO2</text>
        <dbReference type="Rhea" id="RHEA:12188"/>
        <dbReference type="Rhea" id="RHEA-COMP:10474"/>
        <dbReference type="Rhea" id="RHEA-COMP:20092"/>
        <dbReference type="ChEBI" id="CHEBI:15378"/>
        <dbReference type="ChEBI" id="CHEBI:16526"/>
        <dbReference type="ChEBI" id="CHEBI:16810"/>
        <dbReference type="ChEBI" id="CHEBI:83099"/>
        <dbReference type="ChEBI" id="CHEBI:83120"/>
        <dbReference type="EC" id="1.2.4.2"/>
    </reaction>
</comment>
<comment type="cofactor">
    <cofactor evidence="1">
        <name>thiamine diphosphate</name>
        <dbReference type="ChEBI" id="CHEBI:58937"/>
    </cofactor>
</comment>
<comment type="subunit">
    <text evidence="1">Homodimer. Part of the 2-oxoglutarate dehydrogenase (OGDH) complex composed of E1 (2-oxoglutarate dehydrogenase), E2 (dihydrolipoamide succinyltransferase) and E3 (dihydrolipoamide dehydrogenase); the complex contains multiple copies of the three enzymatic components (E1, E2 and E3).</text>
</comment>
<comment type="similarity">
    <text evidence="1">Belongs to the alpha-ketoglutarate dehydrogenase family.</text>
</comment>
<keyword id="KW-0324">Glycolysis</keyword>
<keyword id="KW-0560">Oxidoreductase</keyword>
<keyword id="KW-0786">Thiamine pyrophosphate</keyword>
<gene>
    <name evidence="1" type="primary">sucA</name>
    <name evidence="1" type="synonym">odhA</name>
    <name type="ordered locus">BAbS19_I18040</name>
</gene>
<proteinExistence type="inferred from homology"/>
<name>ODO1_BRUA1</name>
<dbReference type="EC" id="1.2.4.2" evidence="1"/>
<dbReference type="EMBL" id="CP000887">
    <property type="protein sequence ID" value="ACD73286.1"/>
    <property type="molecule type" value="Genomic_DNA"/>
</dbReference>
<dbReference type="RefSeq" id="WP_002968648.1">
    <property type="nucleotide sequence ID" value="NC_010742.1"/>
</dbReference>
<dbReference type="SMR" id="B2S877"/>
<dbReference type="KEGG" id="bmc:BAbS19_I18040"/>
<dbReference type="HOGENOM" id="CLU_004709_1_0_5"/>
<dbReference type="Proteomes" id="UP000002565">
    <property type="component" value="Chromosome 1"/>
</dbReference>
<dbReference type="GO" id="GO:0005829">
    <property type="term" value="C:cytosol"/>
    <property type="evidence" value="ECO:0007669"/>
    <property type="project" value="TreeGrafter"/>
</dbReference>
<dbReference type="GO" id="GO:0045252">
    <property type="term" value="C:oxoglutarate dehydrogenase complex"/>
    <property type="evidence" value="ECO:0007669"/>
    <property type="project" value="TreeGrafter"/>
</dbReference>
<dbReference type="GO" id="GO:0004591">
    <property type="term" value="F:oxoglutarate dehydrogenase (succinyl-transferring) activity"/>
    <property type="evidence" value="ECO:0007669"/>
    <property type="project" value="UniProtKB-UniRule"/>
</dbReference>
<dbReference type="GO" id="GO:0030976">
    <property type="term" value="F:thiamine pyrophosphate binding"/>
    <property type="evidence" value="ECO:0007669"/>
    <property type="project" value="UniProtKB-UniRule"/>
</dbReference>
<dbReference type="GO" id="GO:0006096">
    <property type="term" value="P:glycolytic process"/>
    <property type="evidence" value="ECO:0007669"/>
    <property type="project" value="UniProtKB-UniRule"/>
</dbReference>
<dbReference type="GO" id="GO:0006099">
    <property type="term" value="P:tricarboxylic acid cycle"/>
    <property type="evidence" value="ECO:0007669"/>
    <property type="project" value="TreeGrafter"/>
</dbReference>
<dbReference type="CDD" id="cd02016">
    <property type="entry name" value="TPP_E1_OGDC_like"/>
    <property type="match status" value="1"/>
</dbReference>
<dbReference type="FunFam" id="3.40.50.12470:FF:000003">
    <property type="entry name" value="2-oxoglutarate dehydrogenase E1 component"/>
    <property type="match status" value="1"/>
</dbReference>
<dbReference type="Gene3D" id="3.40.50.12470">
    <property type="match status" value="1"/>
</dbReference>
<dbReference type="Gene3D" id="3.40.50.970">
    <property type="match status" value="1"/>
</dbReference>
<dbReference type="Gene3D" id="3.40.50.11610">
    <property type="entry name" value="Multifunctional 2-oxoglutarate metabolism enzyme, C-terminal domain"/>
    <property type="match status" value="1"/>
</dbReference>
<dbReference type="Gene3D" id="1.10.287.1150">
    <property type="entry name" value="TPP helical domain"/>
    <property type="match status" value="1"/>
</dbReference>
<dbReference type="HAMAP" id="MF_01169">
    <property type="entry name" value="SucA_OdhA"/>
    <property type="match status" value="1"/>
</dbReference>
<dbReference type="InterPro" id="IPR032106">
    <property type="entry name" value="2-oxogl_dehyd_N"/>
</dbReference>
<dbReference type="InterPro" id="IPR011603">
    <property type="entry name" value="2oxoglutarate_DH_E1"/>
</dbReference>
<dbReference type="InterPro" id="IPR023784">
    <property type="entry name" value="2oxoglutarate_DH_E1_bac"/>
</dbReference>
<dbReference type="InterPro" id="IPR001017">
    <property type="entry name" value="DH_E1"/>
</dbReference>
<dbReference type="InterPro" id="IPR042179">
    <property type="entry name" value="KGD_C_sf"/>
</dbReference>
<dbReference type="InterPro" id="IPR031717">
    <property type="entry name" value="ODO-1/KGD_C"/>
</dbReference>
<dbReference type="InterPro" id="IPR029061">
    <property type="entry name" value="THDP-binding"/>
</dbReference>
<dbReference type="InterPro" id="IPR005475">
    <property type="entry name" value="Transketolase-like_Pyr-bd"/>
</dbReference>
<dbReference type="NCBIfam" id="TIGR00239">
    <property type="entry name" value="2oxo_dh_E1"/>
    <property type="match status" value="1"/>
</dbReference>
<dbReference type="NCBIfam" id="NF006914">
    <property type="entry name" value="PRK09404.1"/>
    <property type="match status" value="1"/>
</dbReference>
<dbReference type="NCBIfam" id="NF008907">
    <property type="entry name" value="PRK12270.1"/>
    <property type="match status" value="1"/>
</dbReference>
<dbReference type="PANTHER" id="PTHR23152:SF4">
    <property type="entry name" value="2-OXOADIPATE DEHYDROGENASE COMPLEX COMPONENT E1"/>
    <property type="match status" value="1"/>
</dbReference>
<dbReference type="PANTHER" id="PTHR23152">
    <property type="entry name" value="2-OXOGLUTARATE DEHYDROGENASE"/>
    <property type="match status" value="1"/>
</dbReference>
<dbReference type="Pfam" id="PF16078">
    <property type="entry name" value="2-oxogl_dehyd_N"/>
    <property type="match status" value="1"/>
</dbReference>
<dbReference type="Pfam" id="PF00676">
    <property type="entry name" value="E1_dh"/>
    <property type="match status" value="1"/>
</dbReference>
<dbReference type="Pfam" id="PF16870">
    <property type="entry name" value="OxoGdeHyase_C"/>
    <property type="match status" value="1"/>
</dbReference>
<dbReference type="Pfam" id="PF02779">
    <property type="entry name" value="Transket_pyr"/>
    <property type="match status" value="1"/>
</dbReference>
<dbReference type="PIRSF" id="PIRSF000157">
    <property type="entry name" value="Oxoglu_dh_E1"/>
    <property type="match status" value="1"/>
</dbReference>
<dbReference type="SMART" id="SM00861">
    <property type="entry name" value="Transket_pyr"/>
    <property type="match status" value="1"/>
</dbReference>
<dbReference type="SUPFAM" id="SSF52518">
    <property type="entry name" value="Thiamin diphosphate-binding fold (THDP-binding)"/>
    <property type="match status" value="2"/>
</dbReference>
<evidence type="ECO:0000255" key="1">
    <source>
        <dbReference type="HAMAP-Rule" id="MF_01169"/>
    </source>
</evidence>
<feature type="chain" id="PRO_1000137971" description="2-oxoglutarate dehydrogenase E1 component">
    <location>
        <begin position="1"/>
        <end position="1004"/>
    </location>
</feature>
<accession>B2S877</accession>
<organism>
    <name type="scientific">Brucella abortus (strain S19)</name>
    <dbReference type="NCBI Taxonomy" id="430066"/>
    <lineage>
        <taxon>Bacteria</taxon>
        <taxon>Pseudomonadati</taxon>
        <taxon>Pseudomonadota</taxon>
        <taxon>Alphaproteobacteria</taxon>
        <taxon>Hyphomicrobiales</taxon>
        <taxon>Brucellaceae</taxon>
        <taxon>Brucella/Ochrobactrum group</taxon>
        <taxon>Brucella</taxon>
    </lineage>
</organism>